<protein>
    <recommendedName>
        <fullName evidence="1">Histidine ammonia-lyase</fullName>
        <shortName evidence="1">Histidase</shortName>
        <ecNumber evidence="1">4.3.1.3</ecNumber>
    </recommendedName>
</protein>
<organism>
    <name type="scientific">Enterobacter sp. (strain 638)</name>
    <dbReference type="NCBI Taxonomy" id="399742"/>
    <lineage>
        <taxon>Bacteria</taxon>
        <taxon>Pseudomonadati</taxon>
        <taxon>Pseudomonadota</taxon>
        <taxon>Gammaproteobacteria</taxon>
        <taxon>Enterobacterales</taxon>
        <taxon>Enterobacteriaceae</taxon>
        <taxon>Enterobacter</taxon>
    </lineage>
</organism>
<gene>
    <name evidence="1" type="primary">hutH</name>
    <name type="ordered locus">Ent638_1264</name>
</gene>
<evidence type="ECO:0000255" key="1">
    <source>
        <dbReference type="HAMAP-Rule" id="MF_00229"/>
    </source>
</evidence>
<name>HUTH_ENT38</name>
<keyword id="KW-0963">Cytoplasm</keyword>
<keyword id="KW-0369">Histidine metabolism</keyword>
<keyword id="KW-0456">Lyase</keyword>
<comment type="catalytic activity">
    <reaction evidence="1">
        <text>L-histidine = trans-urocanate + NH4(+)</text>
        <dbReference type="Rhea" id="RHEA:21232"/>
        <dbReference type="ChEBI" id="CHEBI:17771"/>
        <dbReference type="ChEBI" id="CHEBI:28938"/>
        <dbReference type="ChEBI" id="CHEBI:57595"/>
        <dbReference type="EC" id="4.3.1.3"/>
    </reaction>
</comment>
<comment type="pathway">
    <text evidence="1">Amino-acid degradation; L-histidine degradation into L-glutamate; N-formimidoyl-L-glutamate from L-histidine: step 1/3.</text>
</comment>
<comment type="subcellular location">
    <subcellularLocation>
        <location evidence="1">Cytoplasm</location>
    </subcellularLocation>
</comment>
<comment type="PTM">
    <text evidence="1">Contains an active site 4-methylidene-imidazol-5-one (MIO), which is formed autocatalytically by cyclization and dehydration of residues Ala-Ser-Gly.</text>
</comment>
<comment type="similarity">
    <text evidence="1">Belongs to the PAL/histidase family.</text>
</comment>
<dbReference type="EC" id="4.3.1.3" evidence="1"/>
<dbReference type="EMBL" id="CP000653">
    <property type="protein sequence ID" value="ABP59945.1"/>
    <property type="molecule type" value="Genomic_DNA"/>
</dbReference>
<dbReference type="RefSeq" id="WP_012016664.1">
    <property type="nucleotide sequence ID" value="NC_009436.1"/>
</dbReference>
<dbReference type="SMR" id="A4W8B5"/>
<dbReference type="STRING" id="399742.Ent638_1264"/>
<dbReference type="KEGG" id="ent:Ent638_1264"/>
<dbReference type="eggNOG" id="COG2986">
    <property type="taxonomic scope" value="Bacteria"/>
</dbReference>
<dbReference type="HOGENOM" id="CLU_014801_4_0_6"/>
<dbReference type="OrthoDB" id="9806955at2"/>
<dbReference type="UniPathway" id="UPA00379">
    <property type="reaction ID" value="UER00549"/>
</dbReference>
<dbReference type="Proteomes" id="UP000000230">
    <property type="component" value="Chromosome"/>
</dbReference>
<dbReference type="GO" id="GO:0005737">
    <property type="term" value="C:cytoplasm"/>
    <property type="evidence" value="ECO:0007669"/>
    <property type="project" value="UniProtKB-SubCell"/>
</dbReference>
<dbReference type="GO" id="GO:0004397">
    <property type="term" value="F:histidine ammonia-lyase activity"/>
    <property type="evidence" value="ECO:0007669"/>
    <property type="project" value="UniProtKB-UniRule"/>
</dbReference>
<dbReference type="GO" id="GO:0019556">
    <property type="term" value="P:L-histidine catabolic process to glutamate and formamide"/>
    <property type="evidence" value="ECO:0007669"/>
    <property type="project" value="UniProtKB-UniPathway"/>
</dbReference>
<dbReference type="GO" id="GO:0019557">
    <property type="term" value="P:L-histidine catabolic process to glutamate and formate"/>
    <property type="evidence" value="ECO:0007669"/>
    <property type="project" value="UniProtKB-UniPathway"/>
</dbReference>
<dbReference type="CDD" id="cd00332">
    <property type="entry name" value="PAL-HAL"/>
    <property type="match status" value="1"/>
</dbReference>
<dbReference type="FunFam" id="1.10.275.10:FF:000005">
    <property type="entry name" value="Histidine ammonia-lyase"/>
    <property type="match status" value="1"/>
</dbReference>
<dbReference type="FunFam" id="1.20.200.10:FF:000003">
    <property type="entry name" value="Histidine ammonia-lyase"/>
    <property type="match status" value="1"/>
</dbReference>
<dbReference type="Gene3D" id="1.20.200.10">
    <property type="entry name" value="Fumarase/aspartase (Central domain)"/>
    <property type="match status" value="1"/>
</dbReference>
<dbReference type="Gene3D" id="1.10.275.10">
    <property type="entry name" value="Fumarase/aspartase (N-terminal domain)"/>
    <property type="match status" value="1"/>
</dbReference>
<dbReference type="HAMAP" id="MF_00229">
    <property type="entry name" value="His_ammonia_lyase"/>
    <property type="match status" value="1"/>
</dbReference>
<dbReference type="InterPro" id="IPR001106">
    <property type="entry name" value="Aromatic_Lyase"/>
</dbReference>
<dbReference type="InterPro" id="IPR024083">
    <property type="entry name" value="Fumarase/histidase_N"/>
</dbReference>
<dbReference type="InterPro" id="IPR005921">
    <property type="entry name" value="HutH"/>
</dbReference>
<dbReference type="InterPro" id="IPR008948">
    <property type="entry name" value="L-Aspartase-like"/>
</dbReference>
<dbReference type="InterPro" id="IPR022313">
    <property type="entry name" value="Phe/His_NH3-lyase_AS"/>
</dbReference>
<dbReference type="NCBIfam" id="TIGR01225">
    <property type="entry name" value="hutH"/>
    <property type="match status" value="1"/>
</dbReference>
<dbReference type="NCBIfam" id="NF006871">
    <property type="entry name" value="PRK09367.1"/>
    <property type="match status" value="1"/>
</dbReference>
<dbReference type="PANTHER" id="PTHR10362">
    <property type="entry name" value="HISTIDINE AMMONIA-LYASE"/>
    <property type="match status" value="1"/>
</dbReference>
<dbReference type="Pfam" id="PF00221">
    <property type="entry name" value="Lyase_aromatic"/>
    <property type="match status" value="1"/>
</dbReference>
<dbReference type="SUPFAM" id="SSF48557">
    <property type="entry name" value="L-aspartase-like"/>
    <property type="match status" value="1"/>
</dbReference>
<dbReference type="PROSITE" id="PS00488">
    <property type="entry name" value="PAL_HISTIDASE"/>
    <property type="match status" value="1"/>
</dbReference>
<sequence length="506" mass="54142">MNALTLTPGALTLKQLRGVWRHPTPLVLDENAHEAINQSVACVEAIVAEDRTAYGINTGFGLLAQTRIATHDLENLQRSLVLSHAAGVGAPLDDNMVRLMMVLKINSLARGFSGIRLSVIQALIALVNAQVYPWIPSKGSVGASGDLAPLAHMSLLLLGEGKARWQGEWLPAKDALKKAGLEPITLAAKEGLALLNGTQASTAFALRGLFEAEDLFASAVVCGALTTEAVLGSRSPFDARIHAVRGQRGQIDAAAMYRHVLTDTSEIADSHHNCDKVQDPYSLRCQPQVMGACLTQLRHAAEVLLVESNAVSDNPLVFAEQNEVVSGGNFHAEPVAMAADNLALAIAEIGALSERRIALMMDKHMSQLPPFLVRNGGVNSGFMIAQVTAAALASENKALSHPHSVDSLPTSANQEDHVSMAPAAGRRLWEMASNTRGVLAVEWLAAVQGIDLREGLKSSPLLEQARQTLREAVSHYDDDRFFAPDIEKAMELLDDGRLVALLPPVL</sequence>
<proteinExistence type="inferred from homology"/>
<reference key="1">
    <citation type="journal article" date="2010" name="PLoS Genet.">
        <title>Genome sequence of the plant growth promoting endophytic bacterium Enterobacter sp. 638.</title>
        <authorList>
            <person name="Taghavi S."/>
            <person name="van der Lelie D."/>
            <person name="Hoffman A."/>
            <person name="Zhang Y.B."/>
            <person name="Walla M.D."/>
            <person name="Vangronsveld J."/>
            <person name="Newman L."/>
            <person name="Monchy S."/>
        </authorList>
    </citation>
    <scope>NUCLEOTIDE SEQUENCE [LARGE SCALE GENOMIC DNA]</scope>
    <source>
        <strain>638</strain>
    </source>
</reference>
<accession>A4W8B5</accession>
<feature type="chain" id="PRO_1000058762" description="Histidine ammonia-lyase">
    <location>
        <begin position="1"/>
        <end position="506"/>
    </location>
</feature>
<feature type="modified residue" description="2,3-didehydroalanine (Ser)" evidence="1">
    <location>
        <position position="144"/>
    </location>
</feature>
<feature type="cross-link" description="5-imidazolinone (Ala-Gly)" evidence="1">
    <location>
        <begin position="143"/>
        <end position="145"/>
    </location>
</feature>